<sequence>MKNTNDIAVLIVDDSALMRKVIGKVIEGAPGLSIAGKAMNGRFALDMLERVQPDVILLDLEMPHMNGLQFLEQRKRLRIDIPVIILSSIAKEGARVTMQCLELGASDFVTKPFGSESAHLRTVSRKIVDYVTAYGRRYKLLRRTRRCLAMDTPVERPAGEEDLNCLDTQERASLPSVCARAPARDRASYTITPTEGARQTRIVPLRESGALQIIAIGVSTGGPSALRHIFAQLDADLPQPVVVVQHMPAGFTREFAYSLNQVCALEVKEAQEGDLVRRGRVLIAPGDRHLTVERRSLATVAHINSDEPENGHRPSVDVLFESVARHFENRALGILMTGMGRDGAAQLARLYTEGSRTIAQDADSCIVYGMPRVACELGAVGEQVSLDDMAATINRYGKVFASS</sequence>
<gene>
    <name evidence="1" type="primary">cheB</name>
    <name type="ordered locus">TP_0631</name>
</gene>
<feature type="chain" id="PRO_0000158035" description="Protein-glutamate methylesterase/protein-glutamine glutaminase">
    <location>
        <begin position="1"/>
        <end position="403"/>
    </location>
</feature>
<feature type="domain" description="Response regulatory" evidence="1">
    <location>
        <begin position="8"/>
        <end position="126"/>
    </location>
</feature>
<feature type="domain" description="CheB-type methylesterase" evidence="1">
    <location>
        <begin position="204"/>
        <end position="393"/>
    </location>
</feature>
<feature type="active site" evidence="1">
    <location>
        <position position="219"/>
    </location>
</feature>
<feature type="active site" evidence="1">
    <location>
        <position position="246"/>
    </location>
</feature>
<feature type="active site" evidence="1">
    <location>
        <position position="342"/>
    </location>
</feature>
<feature type="modified residue" description="4-aspartylphosphate" evidence="1">
    <location>
        <position position="59"/>
    </location>
</feature>
<evidence type="ECO:0000255" key="1">
    <source>
        <dbReference type="HAMAP-Rule" id="MF_00099"/>
    </source>
</evidence>
<dbReference type="EC" id="3.1.1.61" evidence="1"/>
<dbReference type="EC" id="3.5.1.44" evidence="1"/>
<dbReference type="EMBL" id="AE000520">
    <property type="protein sequence ID" value="AAC65606.1"/>
    <property type="molecule type" value="Genomic_DNA"/>
</dbReference>
<dbReference type="PIR" id="E71300">
    <property type="entry name" value="E71300"/>
</dbReference>
<dbReference type="RefSeq" id="WP_010882077.1">
    <property type="nucleotide sequence ID" value="NC_021490.2"/>
</dbReference>
<dbReference type="SMR" id="O83639"/>
<dbReference type="IntAct" id="O83639">
    <property type="interactions" value="7"/>
</dbReference>
<dbReference type="STRING" id="243276.TP_0631"/>
<dbReference type="EnsemblBacteria" id="AAC65606">
    <property type="protein sequence ID" value="AAC65606"/>
    <property type="gene ID" value="TP_0631"/>
</dbReference>
<dbReference type="KEGG" id="tpa:TP_0631"/>
<dbReference type="KEGG" id="tpw:TPANIC_0631"/>
<dbReference type="eggNOG" id="COG2201">
    <property type="taxonomic scope" value="Bacteria"/>
</dbReference>
<dbReference type="HOGENOM" id="CLU_000445_51_0_12"/>
<dbReference type="OrthoDB" id="9793421at2"/>
<dbReference type="Proteomes" id="UP000000811">
    <property type="component" value="Chromosome"/>
</dbReference>
<dbReference type="GO" id="GO:0005737">
    <property type="term" value="C:cytoplasm"/>
    <property type="evidence" value="ECO:0007669"/>
    <property type="project" value="UniProtKB-SubCell"/>
</dbReference>
<dbReference type="GO" id="GO:0000156">
    <property type="term" value="F:phosphorelay response regulator activity"/>
    <property type="evidence" value="ECO:0007669"/>
    <property type="project" value="InterPro"/>
</dbReference>
<dbReference type="GO" id="GO:0008984">
    <property type="term" value="F:protein-glutamate methylesterase activity"/>
    <property type="evidence" value="ECO:0007669"/>
    <property type="project" value="UniProtKB-UniRule"/>
</dbReference>
<dbReference type="GO" id="GO:0050568">
    <property type="term" value="F:protein-glutamine glutaminase activity"/>
    <property type="evidence" value="ECO:0007669"/>
    <property type="project" value="UniProtKB-UniRule"/>
</dbReference>
<dbReference type="GO" id="GO:0006935">
    <property type="term" value="P:chemotaxis"/>
    <property type="evidence" value="ECO:0007669"/>
    <property type="project" value="UniProtKB-UniRule"/>
</dbReference>
<dbReference type="CDD" id="cd16432">
    <property type="entry name" value="CheB_Rec"/>
    <property type="match status" value="1"/>
</dbReference>
<dbReference type="CDD" id="cd17541">
    <property type="entry name" value="REC_CheB-like"/>
    <property type="match status" value="1"/>
</dbReference>
<dbReference type="Gene3D" id="3.40.50.2300">
    <property type="match status" value="1"/>
</dbReference>
<dbReference type="Gene3D" id="3.40.50.180">
    <property type="entry name" value="Methylesterase CheB, C-terminal domain"/>
    <property type="match status" value="1"/>
</dbReference>
<dbReference type="HAMAP" id="MF_00099">
    <property type="entry name" value="CheB_chemtxs"/>
    <property type="match status" value="1"/>
</dbReference>
<dbReference type="InterPro" id="IPR008248">
    <property type="entry name" value="CheB-like"/>
</dbReference>
<dbReference type="InterPro" id="IPR035909">
    <property type="entry name" value="CheB_C"/>
</dbReference>
<dbReference type="InterPro" id="IPR011006">
    <property type="entry name" value="CheY-like_superfamily"/>
</dbReference>
<dbReference type="InterPro" id="IPR000673">
    <property type="entry name" value="Sig_transdc_resp-reg_Me-estase"/>
</dbReference>
<dbReference type="InterPro" id="IPR001789">
    <property type="entry name" value="Sig_transdc_resp-reg_receiver"/>
</dbReference>
<dbReference type="NCBIfam" id="NF001965">
    <property type="entry name" value="PRK00742.1"/>
    <property type="match status" value="1"/>
</dbReference>
<dbReference type="PANTHER" id="PTHR42872">
    <property type="entry name" value="PROTEIN-GLUTAMATE METHYLESTERASE/PROTEIN-GLUTAMINE GLUTAMINASE"/>
    <property type="match status" value="1"/>
</dbReference>
<dbReference type="PANTHER" id="PTHR42872:SF3">
    <property type="entry name" value="PROTEIN-GLUTAMATE METHYLESTERASE_PROTEIN-GLUTAMINE GLUTAMINASE 1"/>
    <property type="match status" value="1"/>
</dbReference>
<dbReference type="Pfam" id="PF01339">
    <property type="entry name" value="CheB_methylest"/>
    <property type="match status" value="1"/>
</dbReference>
<dbReference type="Pfam" id="PF00072">
    <property type="entry name" value="Response_reg"/>
    <property type="match status" value="1"/>
</dbReference>
<dbReference type="PIRSF" id="PIRSF000876">
    <property type="entry name" value="RR_chemtxs_CheB"/>
    <property type="match status" value="1"/>
</dbReference>
<dbReference type="SMART" id="SM00448">
    <property type="entry name" value="REC"/>
    <property type="match status" value="1"/>
</dbReference>
<dbReference type="SUPFAM" id="SSF52172">
    <property type="entry name" value="CheY-like"/>
    <property type="match status" value="1"/>
</dbReference>
<dbReference type="SUPFAM" id="SSF52738">
    <property type="entry name" value="Methylesterase CheB, C-terminal domain"/>
    <property type="match status" value="1"/>
</dbReference>
<dbReference type="PROSITE" id="PS50122">
    <property type="entry name" value="CHEB"/>
    <property type="match status" value="1"/>
</dbReference>
<dbReference type="PROSITE" id="PS50110">
    <property type="entry name" value="RESPONSE_REGULATORY"/>
    <property type="match status" value="1"/>
</dbReference>
<keyword id="KW-0145">Chemotaxis</keyword>
<keyword id="KW-0963">Cytoplasm</keyword>
<keyword id="KW-0378">Hydrolase</keyword>
<keyword id="KW-0597">Phosphoprotein</keyword>
<keyword id="KW-1185">Reference proteome</keyword>
<proteinExistence type="inferred from homology"/>
<accession>O83639</accession>
<comment type="function">
    <text evidence="1">Involved in chemotaxis. Part of a chemotaxis signal transduction system that modulates chemotaxis in response to various stimuli. Catalyzes the demethylation of specific methylglutamate residues introduced into the chemoreceptors (methyl-accepting chemotaxis proteins or MCP) by CheR. Also mediates the irreversible deamidation of specific glutamine residues to glutamic acid.</text>
</comment>
<comment type="catalytic activity">
    <reaction evidence="1">
        <text>[protein]-L-glutamate 5-O-methyl ester + H2O = L-glutamyl-[protein] + methanol + H(+)</text>
        <dbReference type="Rhea" id="RHEA:23236"/>
        <dbReference type="Rhea" id="RHEA-COMP:10208"/>
        <dbReference type="Rhea" id="RHEA-COMP:10311"/>
        <dbReference type="ChEBI" id="CHEBI:15377"/>
        <dbReference type="ChEBI" id="CHEBI:15378"/>
        <dbReference type="ChEBI" id="CHEBI:17790"/>
        <dbReference type="ChEBI" id="CHEBI:29973"/>
        <dbReference type="ChEBI" id="CHEBI:82795"/>
        <dbReference type="EC" id="3.1.1.61"/>
    </reaction>
</comment>
<comment type="catalytic activity">
    <reaction evidence="1">
        <text>L-glutaminyl-[protein] + H2O = L-glutamyl-[protein] + NH4(+)</text>
        <dbReference type="Rhea" id="RHEA:16441"/>
        <dbReference type="Rhea" id="RHEA-COMP:10207"/>
        <dbReference type="Rhea" id="RHEA-COMP:10208"/>
        <dbReference type="ChEBI" id="CHEBI:15377"/>
        <dbReference type="ChEBI" id="CHEBI:28938"/>
        <dbReference type="ChEBI" id="CHEBI:29973"/>
        <dbReference type="ChEBI" id="CHEBI:30011"/>
        <dbReference type="EC" id="3.5.1.44"/>
    </reaction>
</comment>
<comment type="subcellular location">
    <subcellularLocation>
        <location evidence="1">Cytoplasm</location>
    </subcellularLocation>
</comment>
<comment type="domain">
    <text evidence="1">Contains a C-terminal catalytic domain, and an N-terminal region which modulates catalytic activity.</text>
</comment>
<comment type="PTM">
    <text evidence="1">Phosphorylated by CheA. Phosphorylation of the N-terminal regulatory domain activates the methylesterase activity.</text>
</comment>
<comment type="similarity">
    <text evidence="1">Belongs to the CheB family.</text>
</comment>
<reference key="1">
    <citation type="journal article" date="1998" name="Science">
        <title>Complete genome sequence of Treponema pallidum, the syphilis spirochete.</title>
        <authorList>
            <person name="Fraser C.M."/>
            <person name="Norris S.J."/>
            <person name="Weinstock G.M."/>
            <person name="White O."/>
            <person name="Sutton G.G."/>
            <person name="Dodson R.J."/>
            <person name="Gwinn M.L."/>
            <person name="Hickey E.K."/>
            <person name="Clayton R.A."/>
            <person name="Ketchum K.A."/>
            <person name="Sodergren E."/>
            <person name="Hardham J.M."/>
            <person name="McLeod M.P."/>
            <person name="Salzberg S.L."/>
            <person name="Peterson J.D."/>
            <person name="Khalak H.G."/>
            <person name="Richardson D.L."/>
            <person name="Howell J.K."/>
            <person name="Chidambaram M."/>
            <person name="Utterback T.R."/>
            <person name="McDonald L.A."/>
            <person name="Artiach P."/>
            <person name="Bowman C."/>
            <person name="Cotton M.D."/>
            <person name="Fujii C."/>
            <person name="Garland S.A."/>
            <person name="Hatch B."/>
            <person name="Horst K."/>
            <person name="Roberts K.M."/>
            <person name="Sandusky M."/>
            <person name="Weidman J.F."/>
            <person name="Smith H.O."/>
            <person name="Venter J.C."/>
        </authorList>
    </citation>
    <scope>NUCLEOTIDE SEQUENCE [LARGE SCALE GENOMIC DNA]</scope>
    <source>
        <strain>Nichols</strain>
    </source>
</reference>
<name>CHEB_TREPA</name>
<organism>
    <name type="scientific">Treponema pallidum (strain Nichols)</name>
    <dbReference type="NCBI Taxonomy" id="243276"/>
    <lineage>
        <taxon>Bacteria</taxon>
        <taxon>Pseudomonadati</taxon>
        <taxon>Spirochaetota</taxon>
        <taxon>Spirochaetia</taxon>
        <taxon>Spirochaetales</taxon>
        <taxon>Treponemataceae</taxon>
        <taxon>Treponema</taxon>
    </lineage>
</organism>
<protein>
    <recommendedName>
        <fullName evidence="1">Protein-glutamate methylesterase/protein-glutamine glutaminase</fullName>
        <ecNumber evidence="1">3.1.1.61</ecNumber>
        <ecNumber evidence="1">3.5.1.44</ecNumber>
    </recommendedName>
</protein>